<dbReference type="EC" id="6.1.1.1" evidence="1"/>
<dbReference type="EMBL" id="CP000518">
    <property type="protein sequence ID" value="ABL92193.1"/>
    <property type="molecule type" value="Genomic_DNA"/>
</dbReference>
<dbReference type="SMR" id="A1UH85"/>
<dbReference type="STRING" id="189918.Mkms_2999"/>
<dbReference type="KEGG" id="mkm:Mkms_2999"/>
<dbReference type="HOGENOM" id="CLU_024003_0_2_11"/>
<dbReference type="OrthoDB" id="9804243at2"/>
<dbReference type="GO" id="GO:0005829">
    <property type="term" value="C:cytosol"/>
    <property type="evidence" value="ECO:0007669"/>
    <property type="project" value="TreeGrafter"/>
</dbReference>
<dbReference type="GO" id="GO:0005524">
    <property type="term" value="F:ATP binding"/>
    <property type="evidence" value="ECO:0007669"/>
    <property type="project" value="UniProtKB-UniRule"/>
</dbReference>
<dbReference type="GO" id="GO:0003723">
    <property type="term" value="F:RNA binding"/>
    <property type="evidence" value="ECO:0007669"/>
    <property type="project" value="UniProtKB-KW"/>
</dbReference>
<dbReference type="GO" id="GO:0004831">
    <property type="term" value="F:tyrosine-tRNA ligase activity"/>
    <property type="evidence" value="ECO:0007669"/>
    <property type="project" value="UniProtKB-UniRule"/>
</dbReference>
<dbReference type="GO" id="GO:0006437">
    <property type="term" value="P:tyrosyl-tRNA aminoacylation"/>
    <property type="evidence" value="ECO:0007669"/>
    <property type="project" value="UniProtKB-UniRule"/>
</dbReference>
<dbReference type="CDD" id="cd00165">
    <property type="entry name" value="S4"/>
    <property type="match status" value="1"/>
</dbReference>
<dbReference type="CDD" id="cd00805">
    <property type="entry name" value="TyrRS_core"/>
    <property type="match status" value="1"/>
</dbReference>
<dbReference type="FunFam" id="1.10.240.10:FF:000001">
    <property type="entry name" value="Tyrosine--tRNA ligase"/>
    <property type="match status" value="1"/>
</dbReference>
<dbReference type="FunFam" id="3.10.290.10:FF:000014">
    <property type="entry name" value="Tyrosine--tRNA ligase"/>
    <property type="match status" value="1"/>
</dbReference>
<dbReference type="FunFam" id="3.40.50.620:FF:000008">
    <property type="entry name" value="Tyrosine--tRNA ligase"/>
    <property type="match status" value="1"/>
</dbReference>
<dbReference type="Gene3D" id="3.40.50.620">
    <property type="entry name" value="HUPs"/>
    <property type="match status" value="1"/>
</dbReference>
<dbReference type="Gene3D" id="3.10.290.10">
    <property type="entry name" value="RNA-binding S4 domain"/>
    <property type="match status" value="1"/>
</dbReference>
<dbReference type="Gene3D" id="1.10.240.10">
    <property type="entry name" value="Tyrosyl-Transfer RNA Synthetase"/>
    <property type="match status" value="1"/>
</dbReference>
<dbReference type="HAMAP" id="MF_02006">
    <property type="entry name" value="Tyr_tRNA_synth_type1"/>
    <property type="match status" value="1"/>
</dbReference>
<dbReference type="InterPro" id="IPR001412">
    <property type="entry name" value="aa-tRNA-synth_I_CS"/>
</dbReference>
<dbReference type="InterPro" id="IPR002305">
    <property type="entry name" value="aa-tRNA-synth_Ic"/>
</dbReference>
<dbReference type="InterPro" id="IPR014729">
    <property type="entry name" value="Rossmann-like_a/b/a_fold"/>
</dbReference>
<dbReference type="InterPro" id="IPR002942">
    <property type="entry name" value="S4_RNA-bd"/>
</dbReference>
<dbReference type="InterPro" id="IPR036986">
    <property type="entry name" value="S4_RNA-bd_sf"/>
</dbReference>
<dbReference type="InterPro" id="IPR054608">
    <property type="entry name" value="SYY-like_C"/>
</dbReference>
<dbReference type="InterPro" id="IPR002307">
    <property type="entry name" value="Tyr-tRNA-ligase"/>
</dbReference>
<dbReference type="InterPro" id="IPR024088">
    <property type="entry name" value="Tyr-tRNA-ligase_bac-type"/>
</dbReference>
<dbReference type="InterPro" id="IPR024107">
    <property type="entry name" value="Tyr-tRNA-ligase_bac_1"/>
</dbReference>
<dbReference type="NCBIfam" id="TIGR00234">
    <property type="entry name" value="tyrS"/>
    <property type="match status" value="1"/>
</dbReference>
<dbReference type="PANTHER" id="PTHR11766:SF0">
    <property type="entry name" value="TYROSINE--TRNA LIGASE, MITOCHONDRIAL"/>
    <property type="match status" value="1"/>
</dbReference>
<dbReference type="PANTHER" id="PTHR11766">
    <property type="entry name" value="TYROSYL-TRNA SYNTHETASE"/>
    <property type="match status" value="1"/>
</dbReference>
<dbReference type="Pfam" id="PF22421">
    <property type="entry name" value="SYY_C-terminal"/>
    <property type="match status" value="1"/>
</dbReference>
<dbReference type="Pfam" id="PF00579">
    <property type="entry name" value="tRNA-synt_1b"/>
    <property type="match status" value="1"/>
</dbReference>
<dbReference type="PRINTS" id="PR01040">
    <property type="entry name" value="TRNASYNTHTYR"/>
</dbReference>
<dbReference type="SMART" id="SM00363">
    <property type="entry name" value="S4"/>
    <property type="match status" value="1"/>
</dbReference>
<dbReference type="SUPFAM" id="SSF55174">
    <property type="entry name" value="Alpha-L RNA-binding motif"/>
    <property type="match status" value="1"/>
</dbReference>
<dbReference type="SUPFAM" id="SSF52374">
    <property type="entry name" value="Nucleotidylyl transferase"/>
    <property type="match status" value="1"/>
</dbReference>
<dbReference type="PROSITE" id="PS00178">
    <property type="entry name" value="AA_TRNA_LIGASE_I"/>
    <property type="match status" value="1"/>
</dbReference>
<dbReference type="PROSITE" id="PS50889">
    <property type="entry name" value="S4"/>
    <property type="match status" value="1"/>
</dbReference>
<organism>
    <name type="scientific">Mycobacterium sp. (strain KMS)</name>
    <dbReference type="NCBI Taxonomy" id="189918"/>
    <lineage>
        <taxon>Bacteria</taxon>
        <taxon>Bacillati</taxon>
        <taxon>Actinomycetota</taxon>
        <taxon>Actinomycetes</taxon>
        <taxon>Mycobacteriales</taxon>
        <taxon>Mycobacteriaceae</taxon>
        <taxon>Mycobacterium</taxon>
    </lineage>
</organism>
<keyword id="KW-0030">Aminoacyl-tRNA synthetase</keyword>
<keyword id="KW-0067">ATP-binding</keyword>
<keyword id="KW-0963">Cytoplasm</keyword>
<keyword id="KW-0436">Ligase</keyword>
<keyword id="KW-0547">Nucleotide-binding</keyword>
<keyword id="KW-0648">Protein biosynthesis</keyword>
<keyword id="KW-0694">RNA-binding</keyword>
<comment type="function">
    <text evidence="1">Catalyzes the attachment of tyrosine to tRNA(Tyr) in a two-step reaction: tyrosine is first activated by ATP to form Tyr-AMP and then transferred to the acceptor end of tRNA(Tyr).</text>
</comment>
<comment type="catalytic activity">
    <reaction evidence="1">
        <text>tRNA(Tyr) + L-tyrosine + ATP = L-tyrosyl-tRNA(Tyr) + AMP + diphosphate + H(+)</text>
        <dbReference type="Rhea" id="RHEA:10220"/>
        <dbReference type="Rhea" id="RHEA-COMP:9706"/>
        <dbReference type="Rhea" id="RHEA-COMP:9707"/>
        <dbReference type="ChEBI" id="CHEBI:15378"/>
        <dbReference type="ChEBI" id="CHEBI:30616"/>
        <dbReference type="ChEBI" id="CHEBI:33019"/>
        <dbReference type="ChEBI" id="CHEBI:58315"/>
        <dbReference type="ChEBI" id="CHEBI:78442"/>
        <dbReference type="ChEBI" id="CHEBI:78536"/>
        <dbReference type="ChEBI" id="CHEBI:456215"/>
        <dbReference type="EC" id="6.1.1.1"/>
    </reaction>
</comment>
<comment type="subunit">
    <text evidence="1">Homodimer.</text>
</comment>
<comment type="subcellular location">
    <subcellularLocation>
        <location evidence="1">Cytoplasm</location>
    </subcellularLocation>
</comment>
<comment type="similarity">
    <text evidence="1">Belongs to the class-I aminoacyl-tRNA synthetase family. TyrS type 1 subfamily.</text>
</comment>
<feature type="chain" id="PRO_1000088602" description="Tyrosine--tRNA ligase">
    <location>
        <begin position="1"/>
        <end position="423"/>
    </location>
</feature>
<feature type="domain" description="S4 RNA-binding" evidence="1">
    <location>
        <begin position="355"/>
        <end position="412"/>
    </location>
</feature>
<feature type="short sequence motif" description="'HIGH' region">
    <location>
        <begin position="40"/>
        <end position="49"/>
    </location>
</feature>
<feature type="short sequence motif" description="'KMSKS' region">
    <location>
        <begin position="230"/>
        <end position="234"/>
    </location>
</feature>
<feature type="binding site" evidence="1">
    <location>
        <position position="35"/>
    </location>
    <ligand>
        <name>L-tyrosine</name>
        <dbReference type="ChEBI" id="CHEBI:58315"/>
    </ligand>
</feature>
<feature type="binding site" evidence="1">
    <location>
        <position position="170"/>
    </location>
    <ligand>
        <name>L-tyrosine</name>
        <dbReference type="ChEBI" id="CHEBI:58315"/>
    </ligand>
</feature>
<feature type="binding site" evidence="1">
    <location>
        <position position="174"/>
    </location>
    <ligand>
        <name>L-tyrosine</name>
        <dbReference type="ChEBI" id="CHEBI:58315"/>
    </ligand>
</feature>
<feature type="binding site" evidence="1">
    <location>
        <position position="233"/>
    </location>
    <ligand>
        <name>ATP</name>
        <dbReference type="ChEBI" id="CHEBI:30616"/>
    </ligand>
</feature>
<reference key="1">
    <citation type="submission" date="2006-12" db="EMBL/GenBank/DDBJ databases">
        <title>Complete sequence of chromosome of Mycobacterium sp. KMS.</title>
        <authorList>
            <consortium name="US DOE Joint Genome Institute"/>
            <person name="Copeland A."/>
            <person name="Lucas S."/>
            <person name="Lapidus A."/>
            <person name="Barry K."/>
            <person name="Detter J.C."/>
            <person name="Glavina del Rio T."/>
            <person name="Hammon N."/>
            <person name="Israni S."/>
            <person name="Dalin E."/>
            <person name="Tice H."/>
            <person name="Pitluck S."/>
            <person name="Kiss H."/>
            <person name="Brettin T."/>
            <person name="Bruce D."/>
            <person name="Han C."/>
            <person name="Tapia R."/>
            <person name="Gilna P."/>
            <person name="Schmutz J."/>
            <person name="Larimer F."/>
            <person name="Land M."/>
            <person name="Hauser L."/>
            <person name="Kyrpides N."/>
            <person name="Mikhailova N."/>
            <person name="Miller C.D."/>
            <person name="Richardson P."/>
        </authorList>
    </citation>
    <scope>NUCLEOTIDE SEQUENCE [LARGE SCALE GENOMIC DNA]</scope>
    <source>
        <strain>KMS</strain>
    </source>
</reference>
<evidence type="ECO:0000255" key="1">
    <source>
        <dbReference type="HAMAP-Rule" id="MF_02006"/>
    </source>
</evidence>
<gene>
    <name evidence="1" type="primary">tyrS</name>
    <name type="ordered locus">Mkms_2999</name>
</gene>
<name>SYY_MYCSK</name>
<protein>
    <recommendedName>
        <fullName evidence="1">Tyrosine--tRNA ligase</fullName>
        <ecNumber evidence="1">6.1.1.1</ecNumber>
    </recommendedName>
    <alternativeName>
        <fullName evidence="1">Tyrosyl-tRNA synthetase</fullName>
        <shortName evidence="1">TyrRS</shortName>
    </alternativeName>
</protein>
<accession>A1UH85</accession>
<sequence>MSSILDELDWRGLIAQSTDRDALAAELAAGPMTLYSGFDPTAPSLHAGHLVPLLTLRRFQQAGHRPIVLAGGATGMIGDPRDTGERTLQTADTVADWADRIRGQLERFVEFDESPTGAIVENNLSWTGALSTIEFLRDVGKYFSVNVMLDRDTVRRRLEGEGISYTEFSYMLLQANDYVQLRKRHGCALQIGGSDQWGNIVAGVRLVRQKLGDTVHAMTTPLVTDSEGKKFGKSTGGGNLWLDPEMTTPYAWYQYFINTADADVVNYLRWFTFLEAGELAELEEATRDRPHQRTAQRRLARELTTLVHGEDATRSVEHASQALFGRGELAALDEPTLAAALREASVAELTPSGPDLITDLLVATGLSASKGAARRTIAEGGVSVNNMKIDSDEWTPQASDFLHGRWLVLRRGKRNIAGVQRVG</sequence>
<proteinExistence type="inferred from homology"/>